<gene>
    <name type="primary">bchI</name>
    <name type="ordered locus">Cpar_0725</name>
</gene>
<comment type="function">
    <text>Involved in bacteriochlorophyll biosynthesis; introduces a magnesium ion into protoporphyrin IX to yield Mg-protoporphyrin IX.</text>
</comment>
<comment type="catalytic activity">
    <reaction>
        <text>protoporphyrin IX + Mg(2+) + ATP + H2O = Mg-protoporphyrin IX + ADP + phosphate + 3 H(+)</text>
        <dbReference type="Rhea" id="RHEA:13961"/>
        <dbReference type="ChEBI" id="CHEBI:15377"/>
        <dbReference type="ChEBI" id="CHEBI:15378"/>
        <dbReference type="ChEBI" id="CHEBI:18420"/>
        <dbReference type="ChEBI" id="CHEBI:30616"/>
        <dbReference type="ChEBI" id="CHEBI:43474"/>
        <dbReference type="ChEBI" id="CHEBI:57306"/>
        <dbReference type="ChEBI" id="CHEBI:60492"/>
        <dbReference type="ChEBI" id="CHEBI:456216"/>
        <dbReference type="EC" id="6.6.1.1"/>
    </reaction>
</comment>
<comment type="pathway">
    <text>Porphyrin-containing compound metabolism; bacteriochlorophyll biosynthesis.</text>
</comment>
<comment type="similarity">
    <text evidence="2">Belongs to the Mg-chelatase subunits D/I family.</text>
</comment>
<comment type="sequence caution" evidence="2">
    <conflict type="erroneous initiation">
        <sequence resource="EMBL-CDS" id="ACF11144"/>
    </conflict>
</comment>
<sequence>MAFPFTSIVGQEEMKLSLILNIIDPRIGGVLVMGHRGTGKSTTVRALAEVLPLIDRVKGDIYNRTVEQYIEMESGVKGAPVLKASDVKTEKIPVPVVDLPLGATEDRVCGTIDIEKALTSGVKAFEPGLLAQANRGFLYIDEVNLLDDHLVDVLLDVAASGKNVVEREGISIRHPARFVLVGSGNPEEGELRPQLLDRFGLHARIITINDVAKRVEIVKLRREYDENPEAFLKKVVRQQQKLQKEIVAAQKLLPKVSMDDSVLTDIARLCMALGIDGHRGELTITRTAHAFAALQGDTNVTMEHVRKIAGLCLRHRLRKDPLETVDAGEKIDRELAKVLGEAEVAA</sequence>
<protein>
    <recommendedName>
        <fullName>Magnesium-chelatase 38 kDa subunit</fullName>
        <ecNumber>6.6.1.1</ecNumber>
    </recommendedName>
    <alternativeName>
        <fullName>Mg-protoporphyrin IX chelatase</fullName>
    </alternativeName>
</protein>
<reference key="1">
    <citation type="journal article" date="1996" name="Hereditas">
        <title>Clustering of genes with function in the biosynthesis of bacteriochlorophyll and heme in the green sulfur bacterium Chlorobium vibrioforme.</title>
        <authorList>
            <person name="Petersen B.L."/>
            <person name="Moeller M.G."/>
            <person name="Stummann B.M."/>
            <person name="Henningsen K.W."/>
        </authorList>
    </citation>
    <scope>NUCLEOTIDE SEQUENCE [GENOMIC DNA]</scope>
</reference>
<reference key="2">
    <citation type="submission" date="2008-06" db="EMBL/GenBank/DDBJ databases">
        <title>Complete sequence of Chlorobaculum parvum NCIB 8327.</title>
        <authorList>
            <consortium name="US DOE Joint Genome Institute"/>
            <person name="Lucas S."/>
            <person name="Copeland A."/>
            <person name="Lapidus A."/>
            <person name="Glavina del Rio T."/>
            <person name="Dalin E."/>
            <person name="Tice H."/>
            <person name="Bruce D."/>
            <person name="Goodwin L."/>
            <person name="Pitluck S."/>
            <person name="Schmutz J."/>
            <person name="Larimer F."/>
            <person name="Land M."/>
            <person name="Hauser L."/>
            <person name="Kyrpides N."/>
            <person name="Mikhailova N."/>
            <person name="Zhao F."/>
            <person name="Li T."/>
            <person name="Liu Z."/>
            <person name="Overmann J."/>
            <person name="Bryant D.A."/>
            <person name="Richardson P."/>
        </authorList>
    </citation>
    <scope>NUCLEOTIDE SEQUENCE [LARGE SCALE GENOMIC DNA]</scope>
    <source>
        <strain>DSM 263 / NCIMB 8327</strain>
    </source>
</reference>
<proteinExistence type="inferred from homology"/>
<dbReference type="EC" id="6.6.1.1"/>
<dbReference type="EMBL" id="Z83933">
    <property type="protein sequence ID" value="CAB06299.1"/>
    <property type="molecule type" value="Genomic_DNA"/>
</dbReference>
<dbReference type="EMBL" id="CP001099">
    <property type="protein sequence ID" value="ACF11144.1"/>
    <property type="status" value="ALT_INIT"/>
    <property type="molecule type" value="Genomic_DNA"/>
</dbReference>
<dbReference type="PIR" id="T17192">
    <property type="entry name" value="T17192"/>
</dbReference>
<dbReference type="RefSeq" id="WP_232203935.1">
    <property type="nucleotide sequence ID" value="NC_011027.1"/>
</dbReference>
<dbReference type="SMR" id="O50312"/>
<dbReference type="STRING" id="517417.Cpar_0725"/>
<dbReference type="KEGG" id="cpc:Cpar_0725"/>
<dbReference type="eggNOG" id="COG1239">
    <property type="taxonomic scope" value="Bacteria"/>
</dbReference>
<dbReference type="HOGENOM" id="CLU_016684_0_2_10"/>
<dbReference type="UniPathway" id="UPA00669"/>
<dbReference type="Proteomes" id="UP000008811">
    <property type="component" value="Chromosome"/>
</dbReference>
<dbReference type="GO" id="GO:0005524">
    <property type="term" value="F:ATP binding"/>
    <property type="evidence" value="ECO:0007669"/>
    <property type="project" value="UniProtKB-KW"/>
</dbReference>
<dbReference type="GO" id="GO:0016887">
    <property type="term" value="F:ATP hydrolysis activity"/>
    <property type="evidence" value="ECO:0007669"/>
    <property type="project" value="InterPro"/>
</dbReference>
<dbReference type="GO" id="GO:0016851">
    <property type="term" value="F:magnesium chelatase activity"/>
    <property type="evidence" value="ECO:0007669"/>
    <property type="project" value="UniProtKB-EC"/>
</dbReference>
<dbReference type="GO" id="GO:0030494">
    <property type="term" value="P:bacteriochlorophyll biosynthetic process"/>
    <property type="evidence" value="ECO:0007669"/>
    <property type="project" value="UniProtKB-UniPathway"/>
</dbReference>
<dbReference type="GO" id="GO:0015979">
    <property type="term" value="P:photosynthesis"/>
    <property type="evidence" value="ECO:0007669"/>
    <property type="project" value="UniProtKB-KW"/>
</dbReference>
<dbReference type="CDD" id="cd00009">
    <property type="entry name" value="AAA"/>
    <property type="match status" value="1"/>
</dbReference>
<dbReference type="FunFam" id="3.40.50.300:FF:000601">
    <property type="entry name" value="Mg-protoporphyrin IX chelatase"/>
    <property type="match status" value="1"/>
</dbReference>
<dbReference type="Gene3D" id="1.10.8.80">
    <property type="entry name" value="Magnesium chelatase subunit I, C-Terminal domain"/>
    <property type="match status" value="1"/>
</dbReference>
<dbReference type="Gene3D" id="3.40.50.300">
    <property type="entry name" value="P-loop containing nucleotide triphosphate hydrolases"/>
    <property type="match status" value="1"/>
</dbReference>
<dbReference type="InterPro" id="IPR003593">
    <property type="entry name" value="AAA+_ATPase"/>
</dbReference>
<dbReference type="InterPro" id="IPR045006">
    <property type="entry name" value="CHLI-like"/>
</dbReference>
<dbReference type="InterPro" id="IPR041628">
    <property type="entry name" value="ChlI/MoxR_AAA_lid"/>
</dbReference>
<dbReference type="InterPro" id="IPR011775">
    <property type="entry name" value="Mg_chelatase_ATPase-isu"/>
</dbReference>
<dbReference type="InterPro" id="IPR000523">
    <property type="entry name" value="Mg_chelatse_chII-like_cat_dom"/>
</dbReference>
<dbReference type="InterPro" id="IPR027417">
    <property type="entry name" value="P-loop_NTPase"/>
</dbReference>
<dbReference type="NCBIfam" id="TIGR02030">
    <property type="entry name" value="BchI-ChlI"/>
    <property type="match status" value="1"/>
</dbReference>
<dbReference type="PANTHER" id="PTHR32039">
    <property type="entry name" value="MAGNESIUM-CHELATASE SUBUNIT CHLI"/>
    <property type="match status" value="1"/>
</dbReference>
<dbReference type="PANTHER" id="PTHR32039:SF9">
    <property type="entry name" value="MAGNESIUM-CHELATASE SUBUNIT CHLI-2, CHLOROPLASTIC"/>
    <property type="match status" value="1"/>
</dbReference>
<dbReference type="Pfam" id="PF17863">
    <property type="entry name" value="AAA_lid_2"/>
    <property type="match status" value="1"/>
</dbReference>
<dbReference type="Pfam" id="PF01078">
    <property type="entry name" value="Mg_chelatase"/>
    <property type="match status" value="1"/>
</dbReference>
<dbReference type="SMART" id="SM00382">
    <property type="entry name" value="AAA"/>
    <property type="match status" value="1"/>
</dbReference>
<dbReference type="SUPFAM" id="SSF52540">
    <property type="entry name" value="P-loop containing nucleoside triphosphate hydrolases"/>
    <property type="match status" value="1"/>
</dbReference>
<accession>O50312</accession>
<accession>B3QMJ1</accession>
<organism>
    <name type="scientific">Chlorobaculum parvum (strain DSM 263 / NCIMB 8327)</name>
    <name type="common">Chlorobium vibrioforme subsp. thiosulfatophilum</name>
    <dbReference type="NCBI Taxonomy" id="517417"/>
    <lineage>
        <taxon>Bacteria</taxon>
        <taxon>Pseudomonadati</taxon>
        <taxon>Chlorobiota</taxon>
        <taxon>Chlorobiia</taxon>
        <taxon>Chlorobiales</taxon>
        <taxon>Chlorobiaceae</taxon>
        <taxon>Chlorobaculum</taxon>
    </lineage>
</organism>
<keyword id="KW-0067">ATP-binding</keyword>
<keyword id="KW-0077">Bacteriochlorophyll biosynthesis</keyword>
<keyword id="KW-0149">Chlorophyll biosynthesis</keyword>
<keyword id="KW-0436">Ligase</keyword>
<keyword id="KW-0547">Nucleotide-binding</keyword>
<keyword id="KW-0602">Photosynthesis</keyword>
<feature type="chain" id="PRO_0000206858" description="Magnesium-chelatase 38 kDa subunit">
    <location>
        <begin position="1"/>
        <end position="346"/>
    </location>
</feature>
<feature type="binding site" evidence="1">
    <location>
        <begin position="34"/>
        <end position="41"/>
    </location>
    <ligand>
        <name>ATP</name>
        <dbReference type="ChEBI" id="CHEBI:30616"/>
    </ligand>
</feature>
<feature type="sequence conflict" description="In Ref. 1; CAB06299." evidence="2" ref="1">
    <original>L</original>
    <variation>F</variation>
    <location>
        <position position="130"/>
    </location>
</feature>
<evidence type="ECO:0000255" key="1"/>
<evidence type="ECO:0000305" key="2"/>
<name>BCHI_CHLP8</name>